<comment type="function">
    <text>Light-harvesting photosynthetic bile pigment-protein from the phycobiliprotein complex. Allophycocyanin has a maximum absorption at approximately 650 nanometers.</text>
</comment>
<comment type="subunit">
    <text>Component of the phycobilisome. Heterodimer of an alpha and a beta chain.</text>
</comment>
<comment type="subcellular location">
    <subcellularLocation>
        <location>Cellular thylakoid membrane</location>
        <topology>Peripheral membrane protein</topology>
        <orientation>Cytoplasmic side</orientation>
    </subcellularLocation>
    <text>Forms the core of the phycobilisome.</text>
</comment>
<comment type="PTM">
    <text>Contains one covalently linked phycocyanobilin chromophore.</text>
</comment>
<comment type="similarity">
    <text evidence="2">Belongs to the phycobiliprotein family.</text>
</comment>
<gene>
    <name type="primary">apcA</name>
</gene>
<evidence type="ECO:0000250" key="1"/>
<evidence type="ECO:0000305" key="2"/>
<feature type="chain" id="PRO_0000199069" description="Allophycocyanin alpha chain">
    <location>
        <begin position="1"/>
        <end position="160"/>
    </location>
</feature>
<feature type="binding site" description="covalent">
    <location>
        <position position="80"/>
    </location>
    <ligand>
        <name>(2R,3E)-phycocyanobilin</name>
        <dbReference type="ChEBI" id="CHEBI:85275"/>
    </ligand>
</feature>
<feature type="modified residue" description="N4-methylasparagine" evidence="1">
    <location>
        <position position="70"/>
    </location>
</feature>
<sequence>SIVTKAIVNADAEARYLSPGELDRIKSFVAGGASRLRIAQVLTENRERIVKQAGDQLFQKRPDVVSPGGNAYGQEMTATCLRDLDYYLRLVTYGIVSGDVTPIEEIGIVGVREMYKSLGTPIDAVAGGVAAMKNVAATLLSAEDSSEAGSYFDYVVGAMQ</sequence>
<organism>
    <name type="scientific">Anabaena cylindrica</name>
    <dbReference type="NCBI Taxonomy" id="1165"/>
    <lineage>
        <taxon>Bacteria</taxon>
        <taxon>Bacillati</taxon>
        <taxon>Cyanobacteriota</taxon>
        <taxon>Cyanophyceae</taxon>
        <taxon>Nostocales</taxon>
        <taxon>Nostocaceae</taxon>
        <taxon>Anabaena</taxon>
    </lineage>
</organism>
<reference key="1">
    <citation type="journal article" date="1985" name="FEBS Lett.">
        <title>Amino acid sequences of allophycocyanin alpha- and beta-subunits isolated from Anabaena cylindrica.</title>
        <authorList>
            <person name="Minami Y."/>
            <person name="Yamada F."/>
            <person name="Hase T."/>
            <person name="Matsubara H."/>
            <person name="Murakami A."/>
            <person name="Fujita Y."/>
            <person name="Takao T."/>
            <person name="Shimonishi Y."/>
        </authorList>
    </citation>
    <scope>PROTEIN SEQUENCE</scope>
</reference>
<name>PHAA_ANACY</name>
<proteinExistence type="evidence at protein level"/>
<protein>
    <recommendedName>
        <fullName>Allophycocyanin alpha chain</fullName>
    </recommendedName>
</protein>
<accession>P07325</accession>
<dbReference type="PIR" id="A24224">
    <property type="entry name" value="AFAIAC"/>
</dbReference>
<dbReference type="SMR" id="P07325"/>
<dbReference type="OMA" id="GGQLFQK"/>
<dbReference type="GO" id="GO:0030089">
    <property type="term" value="C:phycobilisome"/>
    <property type="evidence" value="ECO:0007669"/>
    <property type="project" value="UniProtKB-KW"/>
</dbReference>
<dbReference type="GO" id="GO:0031676">
    <property type="term" value="C:plasma membrane-derived thylakoid membrane"/>
    <property type="evidence" value="ECO:0007669"/>
    <property type="project" value="UniProtKB-SubCell"/>
</dbReference>
<dbReference type="GO" id="GO:0015979">
    <property type="term" value="P:photosynthesis"/>
    <property type="evidence" value="ECO:0007669"/>
    <property type="project" value="UniProtKB-KW"/>
</dbReference>
<dbReference type="CDD" id="cd12125">
    <property type="entry name" value="APC_alpha"/>
    <property type="match status" value="1"/>
</dbReference>
<dbReference type="Gene3D" id="1.10.490.20">
    <property type="entry name" value="Phycocyanins"/>
    <property type="match status" value="1"/>
</dbReference>
<dbReference type="InterPro" id="IPR009050">
    <property type="entry name" value="Globin-like_sf"/>
</dbReference>
<dbReference type="InterPro" id="IPR012128">
    <property type="entry name" value="Phycobilisome_asu/bsu"/>
</dbReference>
<dbReference type="InterPro" id="IPR038719">
    <property type="entry name" value="Phycobilisome_asu/bsu_sf"/>
</dbReference>
<dbReference type="PANTHER" id="PTHR34011:SF2">
    <property type="entry name" value="ALLOPHYCOCYANIN ALPHA CHAIN"/>
    <property type="match status" value="1"/>
</dbReference>
<dbReference type="PANTHER" id="PTHR34011">
    <property type="entry name" value="PHYCOBILISOME 32.1 KDA LINKER POLYPEPTIDE, PHYCOCYANIN-ASSOCIATED, ROD 2-RELATED"/>
    <property type="match status" value="1"/>
</dbReference>
<dbReference type="Pfam" id="PF00502">
    <property type="entry name" value="Phycobilisome"/>
    <property type="match status" value="1"/>
</dbReference>
<dbReference type="PIRSF" id="PIRSF000081">
    <property type="entry name" value="Phycocyanin"/>
    <property type="match status" value="1"/>
</dbReference>
<dbReference type="SUPFAM" id="SSF46458">
    <property type="entry name" value="Globin-like"/>
    <property type="match status" value="1"/>
</dbReference>
<keyword id="KW-0042">Antenna complex</keyword>
<keyword id="KW-0089">Bile pigment</keyword>
<keyword id="KW-0157">Chromophore</keyword>
<keyword id="KW-0903">Direct protein sequencing</keyword>
<keyword id="KW-0249">Electron transport</keyword>
<keyword id="KW-0472">Membrane</keyword>
<keyword id="KW-0488">Methylation</keyword>
<keyword id="KW-0602">Photosynthesis</keyword>
<keyword id="KW-0605">Phycobilisome</keyword>
<keyword id="KW-0793">Thylakoid</keyword>
<keyword id="KW-0813">Transport</keyword>